<proteinExistence type="inferred from homology"/>
<evidence type="ECO:0000255" key="1">
    <source>
        <dbReference type="HAMAP-Rule" id="MF_01716"/>
    </source>
</evidence>
<feature type="chain" id="PRO_0000261047" description="Ribose import ATP-binding protein RbsA">
    <location>
        <begin position="1"/>
        <end position="517"/>
    </location>
</feature>
<feature type="domain" description="ABC transporter 1" evidence="1">
    <location>
        <begin position="11"/>
        <end position="251"/>
    </location>
</feature>
<feature type="domain" description="ABC transporter 2" evidence="1">
    <location>
        <begin position="263"/>
        <end position="507"/>
    </location>
</feature>
<feature type="binding site" evidence="1">
    <location>
        <begin position="43"/>
        <end position="50"/>
    </location>
    <ligand>
        <name>ATP</name>
        <dbReference type="ChEBI" id="CHEBI:30616"/>
    </ligand>
</feature>
<reference key="1">
    <citation type="journal article" date="2004" name="Proc. Natl. Acad. Sci. U.S.A.">
        <title>Genomic plasticity of the causative agent of melioidosis, Burkholderia pseudomallei.</title>
        <authorList>
            <person name="Holden M.T.G."/>
            <person name="Titball R.W."/>
            <person name="Peacock S.J."/>
            <person name="Cerdeno-Tarraga A.-M."/>
            <person name="Atkins T."/>
            <person name="Crossman L.C."/>
            <person name="Pitt T."/>
            <person name="Churcher C."/>
            <person name="Mungall K.L."/>
            <person name="Bentley S.D."/>
            <person name="Sebaihia M."/>
            <person name="Thomson N.R."/>
            <person name="Bason N."/>
            <person name="Beacham I.R."/>
            <person name="Brooks K."/>
            <person name="Brown K.A."/>
            <person name="Brown N.F."/>
            <person name="Challis G.L."/>
            <person name="Cherevach I."/>
            <person name="Chillingworth T."/>
            <person name="Cronin A."/>
            <person name="Crossett B."/>
            <person name="Davis P."/>
            <person name="DeShazer D."/>
            <person name="Feltwell T."/>
            <person name="Fraser A."/>
            <person name="Hance Z."/>
            <person name="Hauser H."/>
            <person name="Holroyd S."/>
            <person name="Jagels K."/>
            <person name="Keith K.E."/>
            <person name="Maddison M."/>
            <person name="Moule S."/>
            <person name="Price C."/>
            <person name="Quail M.A."/>
            <person name="Rabbinowitsch E."/>
            <person name="Rutherford K."/>
            <person name="Sanders M."/>
            <person name="Simmonds M."/>
            <person name="Songsivilai S."/>
            <person name="Stevens K."/>
            <person name="Tumapa S."/>
            <person name="Vesaratchavest M."/>
            <person name="Whitehead S."/>
            <person name="Yeats C."/>
            <person name="Barrell B.G."/>
            <person name="Oyston P.C.F."/>
            <person name="Parkhill J."/>
        </authorList>
    </citation>
    <scope>NUCLEOTIDE SEQUENCE [LARGE SCALE GENOMIC DNA]</scope>
    <source>
        <strain>K96243</strain>
    </source>
</reference>
<accession>Q63P06</accession>
<organism>
    <name type="scientific">Burkholderia pseudomallei (strain K96243)</name>
    <dbReference type="NCBI Taxonomy" id="272560"/>
    <lineage>
        <taxon>Bacteria</taxon>
        <taxon>Pseudomonadati</taxon>
        <taxon>Pseudomonadota</taxon>
        <taxon>Betaproteobacteria</taxon>
        <taxon>Burkholderiales</taxon>
        <taxon>Burkholderiaceae</taxon>
        <taxon>Burkholderia</taxon>
        <taxon>pseudomallei group</taxon>
    </lineage>
</organism>
<dbReference type="EC" id="7.5.2.7" evidence="1"/>
<dbReference type="EMBL" id="BX571966">
    <property type="protein sequence ID" value="CAH37587.1"/>
    <property type="molecule type" value="Genomic_DNA"/>
</dbReference>
<dbReference type="RefSeq" id="WP_004523590.1">
    <property type="nucleotide sequence ID" value="NZ_CP009537.1"/>
</dbReference>
<dbReference type="RefSeq" id="YP_110163.1">
    <property type="nucleotide sequence ID" value="NC_006351.1"/>
</dbReference>
<dbReference type="SMR" id="Q63P06"/>
<dbReference type="STRING" id="272560.BPSS0142"/>
<dbReference type="KEGG" id="bps:BPSS0142"/>
<dbReference type="PATRIC" id="fig|272560.51.peg.6190"/>
<dbReference type="eggNOG" id="COG1129">
    <property type="taxonomic scope" value="Bacteria"/>
</dbReference>
<dbReference type="Proteomes" id="UP000000605">
    <property type="component" value="Chromosome 2"/>
</dbReference>
<dbReference type="GO" id="GO:0005886">
    <property type="term" value="C:plasma membrane"/>
    <property type="evidence" value="ECO:0007669"/>
    <property type="project" value="UniProtKB-SubCell"/>
</dbReference>
<dbReference type="GO" id="GO:0015611">
    <property type="term" value="F:ABC-type D-ribose transporter activity"/>
    <property type="evidence" value="ECO:0007669"/>
    <property type="project" value="UniProtKB-EC"/>
</dbReference>
<dbReference type="GO" id="GO:0005524">
    <property type="term" value="F:ATP binding"/>
    <property type="evidence" value="ECO:0007669"/>
    <property type="project" value="UniProtKB-KW"/>
</dbReference>
<dbReference type="GO" id="GO:0016887">
    <property type="term" value="F:ATP hydrolysis activity"/>
    <property type="evidence" value="ECO:0007669"/>
    <property type="project" value="InterPro"/>
</dbReference>
<dbReference type="CDD" id="cd03216">
    <property type="entry name" value="ABC_Carb_Monos_I"/>
    <property type="match status" value="1"/>
</dbReference>
<dbReference type="CDD" id="cd03215">
    <property type="entry name" value="ABC_Carb_Monos_II"/>
    <property type="match status" value="1"/>
</dbReference>
<dbReference type="FunFam" id="3.40.50.300:FF:000127">
    <property type="entry name" value="Ribose import ATP-binding protein RbsA"/>
    <property type="match status" value="1"/>
</dbReference>
<dbReference type="Gene3D" id="3.40.50.300">
    <property type="entry name" value="P-loop containing nucleotide triphosphate hydrolases"/>
    <property type="match status" value="2"/>
</dbReference>
<dbReference type="InterPro" id="IPR003593">
    <property type="entry name" value="AAA+_ATPase"/>
</dbReference>
<dbReference type="InterPro" id="IPR050107">
    <property type="entry name" value="ABC_carbohydrate_import_ATPase"/>
</dbReference>
<dbReference type="InterPro" id="IPR003439">
    <property type="entry name" value="ABC_transporter-like_ATP-bd"/>
</dbReference>
<dbReference type="InterPro" id="IPR017871">
    <property type="entry name" value="ABC_transporter-like_CS"/>
</dbReference>
<dbReference type="InterPro" id="IPR027417">
    <property type="entry name" value="P-loop_NTPase"/>
</dbReference>
<dbReference type="PANTHER" id="PTHR43790">
    <property type="entry name" value="CARBOHYDRATE TRANSPORT ATP-BINDING PROTEIN MG119-RELATED"/>
    <property type="match status" value="1"/>
</dbReference>
<dbReference type="PANTHER" id="PTHR43790:SF3">
    <property type="entry name" value="D-ALLOSE IMPORT ATP-BINDING PROTEIN ALSA-RELATED"/>
    <property type="match status" value="1"/>
</dbReference>
<dbReference type="Pfam" id="PF00005">
    <property type="entry name" value="ABC_tran"/>
    <property type="match status" value="2"/>
</dbReference>
<dbReference type="SMART" id="SM00382">
    <property type="entry name" value="AAA"/>
    <property type="match status" value="2"/>
</dbReference>
<dbReference type="SUPFAM" id="SSF52540">
    <property type="entry name" value="P-loop containing nucleoside triphosphate hydrolases"/>
    <property type="match status" value="2"/>
</dbReference>
<dbReference type="PROSITE" id="PS00211">
    <property type="entry name" value="ABC_TRANSPORTER_1"/>
    <property type="match status" value="1"/>
</dbReference>
<dbReference type="PROSITE" id="PS50893">
    <property type="entry name" value="ABC_TRANSPORTER_2"/>
    <property type="match status" value="2"/>
</dbReference>
<dbReference type="PROSITE" id="PS51254">
    <property type="entry name" value="RBSA"/>
    <property type="match status" value="1"/>
</dbReference>
<keyword id="KW-0067">ATP-binding</keyword>
<keyword id="KW-0997">Cell inner membrane</keyword>
<keyword id="KW-1003">Cell membrane</keyword>
<keyword id="KW-0472">Membrane</keyword>
<keyword id="KW-0547">Nucleotide-binding</keyword>
<keyword id="KW-1185">Reference proteome</keyword>
<keyword id="KW-0677">Repeat</keyword>
<keyword id="KW-0762">Sugar transport</keyword>
<keyword id="KW-1278">Translocase</keyword>
<keyword id="KW-0813">Transport</keyword>
<name>RBSA_BURPS</name>
<comment type="function">
    <text evidence="1">Part of the ABC transporter complex RbsABC involved in ribose import. Responsible for energy coupling to the transport system.</text>
</comment>
<comment type="catalytic activity">
    <reaction evidence="1">
        <text>D-ribose(out) + ATP + H2O = D-ribose(in) + ADP + phosphate + H(+)</text>
        <dbReference type="Rhea" id="RHEA:29903"/>
        <dbReference type="ChEBI" id="CHEBI:15377"/>
        <dbReference type="ChEBI" id="CHEBI:15378"/>
        <dbReference type="ChEBI" id="CHEBI:30616"/>
        <dbReference type="ChEBI" id="CHEBI:43474"/>
        <dbReference type="ChEBI" id="CHEBI:47013"/>
        <dbReference type="ChEBI" id="CHEBI:456216"/>
        <dbReference type="EC" id="7.5.2.7"/>
    </reaction>
</comment>
<comment type="subunit">
    <text evidence="1">The complex is composed of an ATP-binding protein (RbsA), two transmembrane proteins (RbsC) and a solute-binding protein (RbsB).</text>
</comment>
<comment type="subcellular location">
    <subcellularLocation>
        <location evidence="1">Cell inner membrane</location>
        <topology evidence="1">Peripheral membrane protein</topology>
    </subcellularLocation>
</comment>
<comment type="similarity">
    <text evidence="1">Belongs to the ABC transporter superfamily. Ribose importer (TC 3.A.1.2.1) family.</text>
</comment>
<sequence length="517" mass="55252">MQRSDPPRPLLEMRGISKTFPAVRALAGVSLTVHPGEVHSLMGENGAGKSTLMKILSGAYQADPGGEILIDGRPISIDGPLAARDAGVAVIYQELCLAPNLSVAENIHVGRELRRGNGRRGTIDRAAMARGCQDVLERLGADFGPNTLVGTLSIAEQQLVEIARAVHTRARILVMDEPTTPLSSRETDNLFRLIRQLRAEGLAIIYISHRMAEIYELSDRVSVLRDGAYVGTLERDALSAERLVGMMVGRDISGFYKKAHAPYDPGNLLLSVRDIADGARVRGCSLDLHAGEVLGIAGLVGAGRTELARLIFGAEPRVRGEVTLAGKAFAAHSPREAIDAGLVYLTEDRKRQGLFLDMSVRENINISVCGRDARLGALDLARGAQRARDAIAALSIRVPHANVNVGALSGGNQQKVLLSRLLETKPRVLILDEPTRGVDIGAKSEIYRIINELARAGVGVIVISSELPEIIGVADRVLVMREGRIAGELGGRTDAPITQEAIIALATGSRTEASAAH</sequence>
<protein>
    <recommendedName>
        <fullName evidence="1">Ribose import ATP-binding protein RbsA</fullName>
        <ecNumber evidence="1">7.5.2.7</ecNumber>
    </recommendedName>
</protein>
<gene>
    <name evidence="1" type="primary">rbsA</name>
    <name type="ordered locus">BPSS0142</name>
</gene>